<dbReference type="EC" id="2.7.1.50" evidence="1"/>
<dbReference type="EMBL" id="CP000468">
    <property type="protein sequence ID" value="ABJ01510.1"/>
    <property type="molecule type" value="Genomic_DNA"/>
</dbReference>
<dbReference type="RefSeq" id="WP_001195614.1">
    <property type="nucleotide sequence ID" value="NZ_CADILS010000067.1"/>
</dbReference>
<dbReference type="SMR" id="A1ACX0"/>
<dbReference type="KEGG" id="ecv:APECO1_4441"/>
<dbReference type="HOGENOM" id="CLU_019943_0_1_6"/>
<dbReference type="UniPathway" id="UPA00060">
    <property type="reaction ID" value="UER00139"/>
</dbReference>
<dbReference type="Proteomes" id="UP000008216">
    <property type="component" value="Chromosome"/>
</dbReference>
<dbReference type="GO" id="GO:0005524">
    <property type="term" value="F:ATP binding"/>
    <property type="evidence" value="ECO:0007669"/>
    <property type="project" value="UniProtKB-UniRule"/>
</dbReference>
<dbReference type="GO" id="GO:0004417">
    <property type="term" value="F:hydroxyethylthiazole kinase activity"/>
    <property type="evidence" value="ECO:0007669"/>
    <property type="project" value="UniProtKB-UniRule"/>
</dbReference>
<dbReference type="GO" id="GO:0000287">
    <property type="term" value="F:magnesium ion binding"/>
    <property type="evidence" value="ECO:0007669"/>
    <property type="project" value="UniProtKB-UniRule"/>
</dbReference>
<dbReference type="GO" id="GO:0009228">
    <property type="term" value="P:thiamine biosynthetic process"/>
    <property type="evidence" value="ECO:0007669"/>
    <property type="project" value="UniProtKB-KW"/>
</dbReference>
<dbReference type="GO" id="GO:0009229">
    <property type="term" value="P:thiamine diphosphate biosynthetic process"/>
    <property type="evidence" value="ECO:0007669"/>
    <property type="project" value="UniProtKB-UniRule"/>
</dbReference>
<dbReference type="CDD" id="cd01170">
    <property type="entry name" value="THZ_kinase"/>
    <property type="match status" value="1"/>
</dbReference>
<dbReference type="FunFam" id="3.40.1190.20:FF:000015">
    <property type="entry name" value="Hydroxyethylthiazole kinase"/>
    <property type="match status" value="1"/>
</dbReference>
<dbReference type="Gene3D" id="3.40.1190.20">
    <property type="match status" value="1"/>
</dbReference>
<dbReference type="HAMAP" id="MF_00228">
    <property type="entry name" value="Thz_kinase"/>
    <property type="match status" value="1"/>
</dbReference>
<dbReference type="InterPro" id="IPR000417">
    <property type="entry name" value="Hyethyz_kinase"/>
</dbReference>
<dbReference type="InterPro" id="IPR029056">
    <property type="entry name" value="Ribokinase-like"/>
</dbReference>
<dbReference type="NCBIfam" id="NF006830">
    <property type="entry name" value="PRK09355.1"/>
    <property type="match status" value="1"/>
</dbReference>
<dbReference type="NCBIfam" id="TIGR00694">
    <property type="entry name" value="thiM"/>
    <property type="match status" value="1"/>
</dbReference>
<dbReference type="Pfam" id="PF02110">
    <property type="entry name" value="HK"/>
    <property type="match status" value="1"/>
</dbReference>
<dbReference type="PIRSF" id="PIRSF000513">
    <property type="entry name" value="Thz_kinase"/>
    <property type="match status" value="1"/>
</dbReference>
<dbReference type="PRINTS" id="PR01099">
    <property type="entry name" value="HYETHTZKNASE"/>
</dbReference>
<dbReference type="SUPFAM" id="SSF53613">
    <property type="entry name" value="Ribokinase-like"/>
    <property type="match status" value="1"/>
</dbReference>
<reference key="1">
    <citation type="journal article" date="2007" name="J. Bacteriol.">
        <title>The genome sequence of avian pathogenic Escherichia coli strain O1:K1:H7 shares strong similarities with human extraintestinal pathogenic E. coli genomes.</title>
        <authorList>
            <person name="Johnson T.J."/>
            <person name="Kariyawasam S."/>
            <person name="Wannemuehler Y."/>
            <person name="Mangiamele P."/>
            <person name="Johnson S.J."/>
            <person name="Doetkott C."/>
            <person name="Skyberg J.A."/>
            <person name="Lynne A.M."/>
            <person name="Johnson J.R."/>
            <person name="Nolan L.K."/>
        </authorList>
    </citation>
    <scope>NUCLEOTIDE SEQUENCE [LARGE SCALE GENOMIC DNA]</scope>
</reference>
<sequence>MQVDLLSSAQSAHALHLFHQHSPLVHCMTNDVVQTFTANTLLALGASPAMVIETEEASQFAAIASALLINVGTLTQPRAQAMSAAVEQATRSQTPWTLDPVAVGALDYRRRFCVELLSHKPTAIRGNASEIMALAGVANGGRGVDTTDAAANAIPAAQTLARETGAIVVVTGEVDYVTDGHRIIGIHGGDPLMTKVVGTGCALSAVVAACCALPGDTLENIASACHWMKQAGERAVARSEGPGSFVPHFLDALWQLTQEVQA</sequence>
<gene>
    <name evidence="1" type="primary">thiM</name>
    <name type="ordered locus">Ecok1_20160</name>
    <name type="ORF">APECO1_4441</name>
</gene>
<proteinExistence type="inferred from homology"/>
<keyword id="KW-0067">ATP-binding</keyword>
<keyword id="KW-0418">Kinase</keyword>
<keyword id="KW-0460">Magnesium</keyword>
<keyword id="KW-0479">Metal-binding</keyword>
<keyword id="KW-0547">Nucleotide-binding</keyword>
<keyword id="KW-1185">Reference proteome</keyword>
<keyword id="KW-0784">Thiamine biosynthesis</keyword>
<keyword id="KW-0808">Transferase</keyword>
<comment type="function">
    <text evidence="1">Catalyzes the phosphorylation of the hydroxyl group of 4-methyl-5-beta-hydroxyethylthiazole (THZ).</text>
</comment>
<comment type="catalytic activity">
    <reaction evidence="1">
        <text>5-(2-hydroxyethyl)-4-methylthiazole + ATP = 4-methyl-5-(2-phosphooxyethyl)-thiazole + ADP + H(+)</text>
        <dbReference type="Rhea" id="RHEA:24212"/>
        <dbReference type="ChEBI" id="CHEBI:15378"/>
        <dbReference type="ChEBI" id="CHEBI:17957"/>
        <dbReference type="ChEBI" id="CHEBI:30616"/>
        <dbReference type="ChEBI" id="CHEBI:58296"/>
        <dbReference type="ChEBI" id="CHEBI:456216"/>
        <dbReference type="EC" id="2.7.1.50"/>
    </reaction>
</comment>
<comment type="cofactor">
    <cofactor evidence="1">
        <name>Mg(2+)</name>
        <dbReference type="ChEBI" id="CHEBI:18420"/>
    </cofactor>
</comment>
<comment type="pathway">
    <text evidence="1">Cofactor biosynthesis; thiamine diphosphate biosynthesis; 4-methyl-5-(2-phosphoethyl)-thiazole from 5-(2-hydroxyethyl)-4-methylthiazole: step 1/1.</text>
</comment>
<comment type="similarity">
    <text evidence="1">Belongs to the Thz kinase family.</text>
</comment>
<feature type="chain" id="PRO_1000021509" description="Hydroxyethylthiazole kinase">
    <location>
        <begin position="1"/>
        <end position="262"/>
    </location>
</feature>
<feature type="binding site" evidence="1">
    <location>
        <position position="50"/>
    </location>
    <ligand>
        <name>substrate</name>
    </ligand>
</feature>
<feature type="binding site" evidence="1">
    <location>
        <position position="125"/>
    </location>
    <ligand>
        <name>ATP</name>
        <dbReference type="ChEBI" id="CHEBI:30616"/>
    </ligand>
</feature>
<feature type="binding site" evidence="1">
    <location>
        <position position="171"/>
    </location>
    <ligand>
        <name>ATP</name>
        <dbReference type="ChEBI" id="CHEBI:30616"/>
    </ligand>
</feature>
<feature type="binding site" evidence="1">
    <location>
        <position position="198"/>
    </location>
    <ligand>
        <name>substrate</name>
    </ligand>
</feature>
<name>THIM_ECOK1</name>
<protein>
    <recommendedName>
        <fullName evidence="1">Hydroxyethylthiazole kinase</fullName>
        <ecNumber evidence="1">2.7.1.50</ecNumber>
    </recommendedName>
    <alternativeName>
        <fullName evidence="1">4-methyl-5-beta-hydroxyethylthiazole kinase</fullName>
        <shortName evidence="1">TH kinase</shortName>
        <shortName evidence="1">Thz kinase</shortName>
    </alternativeName>
</protein>
<evidence type="ECO:0000255" key="1">
    <source>
        <dbReference type="HAMAP-Rule" id="MF_00228"/>
    </source>
</evidence>
<organism>
    <name type="scientific">Escherichia coli O1:K1 / APEC</name>
    <dbReference type="NCBI Taxonomy" id="405955"/>
    <lineage>
        <taxon>Bacteria</taxon>
        <taxon>Pseudomonadati</taxon>
        <taxon>Pseudomonadota</taxon>
        <taxon>Gammaproteobacteria</taxon>
        <taxon>Enterobacterales</taxon>
        <taxon>Enterobacteriaceae</taxon>
        <taxon>Escherichia</taxon>
    </lineage>
</organism>
<accession>A1ACX0</accession>